<organism>
    <name type="scientific">Anaplasma marginale (strain Florida)</name>
    <dbReference type="NCBI Taxonomy" id="320483"/>
    <lineage>
        <taxon>Bacteria</taxon>
        <taxon>Pseudomonadati</taxon>
        <taxon>Pseudomonadota</taxon>
        <taxon>Alphaproteobacteria</taxon>
        <taxon>Rickettsiales</taxon>
        <taxon>Anaplasmataceae</taxon>
        <taxon>Anaplasma</taxon>
    </lineage>
</organism>
<proteinExistence type="inferred from homology"/>
<name>RL4_ANAMF</name>
<comment type="function">
    <text evidence="1">One of the primary rRNA binding proteins, this protein initially binds near the 5'-end of the 23S rRNA. It is important during the early stages of 50S assembly. It makes multiple contacts with different domains of the 23S rRNA in the assembled 50S subunit and ribosome.</text>
</comment>
<comment type="function">
    <text evidence="1">Forms part of the polypeptide exit tunnel.</text>
</comment>
<comment type="subunit">
    <text evidence="1">Part of the 50S ribosomal subunit.</text>
</comment>
<comment type="similarity">
    <text evidence="1">Belongs to the universal ribosomal protein uL4 family.</text>
</comment>
<dbReference type="EMBL" id="CP001079">
    <property type="protein sequence ID" value="ACM49531.1"/>
    <property type="molecule type" value="Genomic_DNA"/>
</dbReference>
<dbReference type="RefSeq" id="WP_011114492.1">
    <property type="nucleotide sequence ID" value="NZ_AFMS01000137.1"/>
</dbReference>
<dbReference type="SMR" id="B9KJ69"/>
<dbReference type="STRING" id="320483.AMF_695"/>
<dbReference type="GeneID" id="7397877"/>
<dbReference type="KEGG" id="amf:AMF_695"/>
<dbReference type="eggNOG" id="COG0088">
    <property type="taxonomic scope" value="Bacteria"/>
</dbReference>
<dbReference type="HOGENOM" id="CLU_041575_5_1_5"/>
<dbReference type="Proteomes" id="UP000007307">
    <property type="component" value="Chromosome"/>
</dbReference>
<dbReference type="GO" id="GO:1990904">
    <property type="term" value="C:ribonucleoprotein complex"/>
    <property type="evidence" value="ECO:0007669"/>
    <property type="project" value="UniProtKB-KW"/>
</dbReference>
<dbReference type="GO" id="GO:0005840">
    <property type="term" value="C:ribosome"/>
    <property type="evidence" value="ECO:0007669"/>
    <property type="project" value="UniProtKB-KW"/>
</dbReference>
<dbReference type="GO" id="GO:0019843">
    <property type="term" value="F:rRNA binding"/>
    <property type="evidence" value="ECO:0007669"/>
    <property type="project" value="UniProtKB-UniRule"/>
</dbReference>
<dbReference type="GO" id="GO:0003735">
    <property type="term" value="F:structural constituent of ribosome"/>
    <property type="evidence" value="ECO:0007669"/>
    <property type="project" value="InterPro"/>
</dbReference>
<dbReference type="GO" id="GO:0006412">
    <property type="term" value="P:translation"/>
    <property type="evidence" value="ECO:0007669"/>
    <property type="project" value="UniProtKB-UniRule"/>
</dbReference>
<dbReference type="Gene3D" id="3.40.1370.10">
    <property type="match status" value="1"/>
</dbReference>
<dbReference type="HAMAP" id="MF_01328_B">
    <property type="entry name" value="Ribosomal_uL4_B"/>
    <property type="match status" value="1"/>
</dbReference>
<dbReference type="InterPro" id="IPR002136">
    <property type="entry name" value="Ribosomal_uL4"/>
</dbReference>
<dbReference type="InterPro" id="IPR013005">
    <property type="entry name" value="Ribosomal_uL4-like"/>
</dbReference>
<dbReference type="InterPro" id="IPR023574">
    <property type="entry name" value="Ribosomal_uL4_dom_sf"/>
</dbReference>
<dbReference type="NCBIfam" id="TIGR03953">
    <property type="entry name" value="rplD_bact"/>
    <property type="match status" value="1"/>
</dbReference>
<dbReference type="PANTHER" id="PTHR10746">
    <property type="entry name" value="50S RIBOSOMAL PROTEIN L4"/>
    <property type="match status" value="1"/>
</dbReference>
<dbReference type="PANTHER" id="PTHR10746:SF6">
    <property type="entry name" value="LARGE RIBOSOMAL SUBUNIT PROTEIN UL4M"/>
    <property type="match status" value="1"/>
</dbReference>
<dbReference type="Pfam" id="PF00573">
    <property type="entry name" value="Ribosomal_L4"/>
    <property type="match status" value="1"/>
</dbReference>
<dbReference type="SUPFAM" id="SSF52166">
    <property type="entry name" value="Ribosomal protein L4"/>
    <property type="match status" value="1"/>
</dbReference>
<keyword id="KW-1185">Reference proteome</keyword>
<keyword id="KW-0687">Ribonucleoprotein</keyword>
<keyword id="KW-0689">Ribosomal protein</keyword>
<keyword id="KW-0694">RNA-binding</keyword>
<keyword id="KW-0699">rRNA-binding</keyword>
<gene>
    <name evidence="1" type="primary">rplD</name>
    <name type="ordered locus">AMF_695</name>
</gene>
<accession>B9KJ69</accession>
<feature type="chain" id="PRO_1000165981" description="Large ribosomal subunit protein uL4">
    <location>
        <begin position="1"/>
        <end position="208"/>
    </location>
</feature>
<evidence type="ECO:0000255" key="1">
    <source>
        <dbReference type="HAMAP-Rule" id="MF_01328"/>
    </source>
</evidence>
<evidence type="ECO:0000305" key="2"/>
<reference key="1">
    <citation type="journal article" date="2009" name="BMC Genomics">
        <title>Conservation in the face of diversity: multistrain analysis of an intracellular bacterium.</title>
        <authorList>
            <person name="Dark M.J."/>
            <person name="Herndon D.R."/>
            <person name="Kappmeyer L.S."/>
            <person name="Gonzales M.P."/>
            <person name="Nordeen E."/>
            <person name="Palmer G.H."/>
            <person name="Knowles D.P. Jr."/>
            <person name="Brayton K.A."/>
        </authorList>
    </citation>
    <scope>NUCLEOTIDE SEQUENCE [LARGE SCALE GENOMIC DNA]</scope>
    <source>
        <strain>Florida</strain>
    </source>
</reference>
<sequence>MEVNVVNIKNEVVGKVQLSAEVFGVQLRRDVLRDVVTWQLAKRRAGTHKTRCISDVSGTTAKPYRQKHTGRARQGSLRSPQFRGGAVVFGPVNRSHAYSLNKKVRRLGLKVALSMKVSDSKLVVLDDSGLLLEKTADAHVAFGNFGAHGSYLVVAETYEDKVMCACRNLPNVDLLKYAGINVLDILRHDCVILTVGTVKCLESRLCNG</sequence>
<protein>
    <recommendedName>
        <fullName evidence="1">Large ribosomal subunit protein uL4</fullName>
    </recommendedName>
    <alternativeName>
        <fullName evidence="2">50S ribosomal protein L4</fullName>
    </alternativeName>
</protein>